<sequence length="100" mass="10999">MIPLQHGLILAAILFVLGLTGLLIRRNLLFMLISLEIMINAAALAFVVAGSYWQQPDGQVMYILAITLAAAEASIGLALLLQMYRRRQTLNIDTVSEMRG</sequence>
<feature type="chain" id="PRO_0000390155" description="NADH-quinone oxidoreductase subunit K">
    <location>
        <begin position="1"/>
        <end position="100"/>
    </location>
</feature>
<feature type="transmembrane region" description="Helical" evidence="1">
    <location>
        <begin position="4"/>
        <end position="24"/>
    </location>
</feature>
<feature type="transmembrane region" description="Helical" evidence="1">
    <location>
        <begin position="28"/>
        <end position="48"/>
    </location>
</feature>
<feature type="transmembrane region" description="Helical" evidence="1">
    <location>
        <begin position="60"/>
        <end position="80"/>
    </location>
</feature>
<evidence type="ECO:0000255" key="1">
    <source>
        <dbReference type="HAMAP-Rule" id="MF_01456"/>
    </source>
</evidence>
<comment type="function">
    <text evidence="1">NDH-1 shuttles electrons from NADH, via FMN and iron-sulfur (Fe-S) centers, to quinones in the respiratory chain. The immediate electron acceptor for the enzyme in this species is believed to be ubiquinone. Couples the redox reaction to proton translocation (for every two electrons transferred, four hydrogen ions are translocated across the cytoplasmic membrane), and thus conserves the redox energy in a proton gradient.</text>
</comment>
<comment type="catalytic activity">
    <reaction evidence="1">
        <text>a quinone + NADH + 5 H(+)(in) = a quinol + NAD(+) + 4 H(+)(out)</text>
        <dbReference type="Rhea" id="RHEA:57888"/>
        <dbReference type="ChEBI" id="CHEBI:15378"/>
        <dbReference type="ChEBI" id="CHEBI:24646"/>
        <dbReference type="ChEBI" id="CHEBI:57540"/>
        <dbReference type="ChEBI" id="CHEBI:57945"/>
        <dbReference type="ChEBI" id="CHEBI:132124"/>
    </reaction>
</comment>
<comment type="subunit">
    <text evidence="1">NDH-1 is composed of 13 different subunits. Subunits NuoA, H, J, K, L, M, N constitute the membrane sector of the complex.</text>
</comment>
<comment type="subcellular location">
    <subcellularLocation>
        <location evidence="1">Cell inner membrane</location>
        <topology evidence="1">Multi-pass membrane protein</topology>
    </subcellularLocation>
</comment>
<comment type="similarity">
    <text evidence="1">Belongs to the complex I subunit 4L family.</text>
</comment>
<name>NUOK_PECCP</name>
<reference key="1">
    <citation type="submission" date="2009-07" db="EMBL/GenBank/DDBJ databases">
        <title>Complete sequence of Pectobacterium carotovorum subsp. carotovorum PC1.</title>
        <authorList>
            <consortium name="US DOE Joint Genome Institute"/>
            <person name="Lucas S."/>
            <person name="Copeland A."/>
            <person name="Lapidus A."/>
            <person name="Glavina del Rio T."/>
            <person name="Tice H."/>
            <person name="Bruce D."/>
            <person name="Goodwin L."/>
            <person name="Pitluck S."/>
            <person name="Munk A.C."/>
            <person name="Brettin T."/>
            <person name="Detter J.C."/>
            <person name="Han C."/>
            <person name="Tapia R."/>
            <person name="Larimer F."/>
            <person name="Land M."/>
            <person name="Hauser L."/>
            <person name="Kyrpides N."/>
            <person name="Mikhailova N."/>
            <person name="Balakrishnan V."/>
            <person name="Glasner J."/>
            <person name="Perna N.T."/>
        </authorList>
    </citation>
    <scope>NUCLEOTIDE SEQUENCE [LARGE SCALE GENOMIC DNA]</scope>
    <source>
        <strain>PC1</strain>
    </source>
</reference>
<accession>C6DA37</accession>
<keyword id="KW-0997">Cell inner membrane</keyword>
<keyword id="KW-1003">Cell membrane</keyword>
<keyword id="KW-0472">Membrane</keyword>
<keyword id="KW-0520">NAD</keyword>
<keyword id="KW-0874">Quinone</keyword>
<keyword id="KW-1278">Translocase</keyword>
<keyword id="KW-0812">Transmembrane</keyword>
<keyword id="KW-1133">Transmembrane helix</keyword>
<keyword id="KW-0813">Transport</keyword>
<keyword id="KW-0830">Ubiquinone</keyword>
<dbReference type="EC" id="7.1.1.-" evidence="1"/>
<dbReference type="EMBL" id="CP001657">
    <property type="protein sequence ID" value="ACT13793.1"/>
    <property type="molecule type" value="Genomic_DNA"/>
</dbReference>
<dbReference type="RefSeq" id="WP_005969835.1">
    <property type="nucleotide sequence ID" value="NC_012917.1"/>
</dbReference>
<dbReference type="SMR" id="C6DA37"/>
<dbReference type="STRING" id="561230.PC1_2763"/>
<dbReference type="GeneID" id="93390978"/>
<dbReference type="KEGG" id="pct:PC1_2763"/>
<dbReference type="eggNOG" id="COG0713">
    <property type="taxonomic scope" value="Bacteria"/>
</dbReference>
<dbReference type="HOGENOM" id="CLU_144724_0_1_6"/>
<dbReference type="OrthoDB" id="9801357at2"/>
<dbReference type="Proteomes" id="UP000002736">
    <property type="component" value="Chromosome"/>
</dbReference>
<dbReference type="GO" id="GO:0030964">
    <property type="term" value="C:NADH dehydrogenase complex"/>
    <property type="evidence" value="ECO:0007669"/>
    <property type="project" value="TreeGrafter"/>
</dbReference>
<dbReference type="GO" id="GO:0005886">
    <property type="term" value="C:plasma membrane"/>
    <property type="evidence" value="ECO:0007669"/>
    <property type="project" value="UniProtKB-SubCell"/>
</dbReference>
<dbReference type="GO" id="GO:0050136">
    <property type="term" value="F:NADH:ubiquinone reductase (non-electrogenic) activity"/>
    <property type="evidence" value="ECO:0007669"/>
    <property type="project" value="UniProtKB-UniRule"/>
</dbReference>
<dbReference type="GO" id="GO:0048038">
    <property type="term" value="F:quinone binding"/>
    <property type="evidence" value="ECO:0007669"/>
    <property type="project" value="UniProtKB-KW"/>
</dbReference>
<dbReference type="GO" id="GO:0042773">
    <property type="term" value="P:ATP synthesis coupled electron transport"/>
    <property type="evidence" value="ECO:0007669"/>
    <property type="project" value="InterPro"/>
</dbReference>
<dbReference type="FunFam" id="1.10.287.3510:FF:000001">
    <property type="entry name" value="NADH-quinone oxidoreductase subunit K"/>
    <property type="match status" value="1"/>
</dbReference>
<dbReference type="Gene3D" id="1.10.287.3510">
    <property type="match status" value="1"/>
</dbReference>
<dbReference type="HAMAP" id="MF_01456">
    <property type="entry name" value="NDH1_NuoK"/>
    <property type="match status" value="1"/>
</dbReference>
<dbReference type="InterPro" id="IPR001133">
    <property type="entry name" value="NADH_UbQ_OxRdtase_chain4L/K"/>
</dbReference>
<dbReference type="InterPro" id="IPR039428">
    <property type="entry name" value="NUOK/Mnh_C1-like"/>
</dbReference>
<dbReference type="NCBIfam" id="NF004319">
    <property type="entry name" value="PRK05715.1-1"/>
    <property type="match status" value="1"/>
</dbReference>
<dbReference type="NCBIfam" id="NF004320">
    <property type="entry name" value="PRK05715.1-2"/>
    <property type="match status" value="1"/>
</dbReference>
<dbReference type="PANTHER" id="PTHR11434:SF16">
    <property type="entry name" value="NADH-UBIQUINONE OXIDOREDUCTASE CHAIN 4L"/>
    <property type="match status" value="1"/>
</dbReference>
<dbReference type="PANTHER" id="PTHR11434">
    <property type="entry name" value="NADH-UBIQUINONE OXIDOREDUCTASE SUBUNIT ND4L"/>
    <property type="match status" value="1"/>
</dbReference>
<dbReference type="Pfam" id="PF00420">
    <property type="entry name" value="Oxidored_q2"/>
    <property type="match status" value="1"/>
</dbReference>
<proteinExistence type="inferred from homology"/>
<gene>
    <name evidence="1" type="primary">nuoK</name>
    <name type="ordered locus">PC1_2763</name>
</gene>
<protein>
    <recommendedName>
        <fullName evidence="1">NADH-quinone oxidoreductase subunit K</fullName>
        <ecNumber evidence="1">7.1.1.-</ecNumber>
    </recommendedName>
    <alternativeName>
        <fullName evidence="1">NADH dehydrogenase I subunit K</fullName>
    </alternativeName>
    <alternativeName>
        <fullName evidence="1">NDH-1 subunit K</fullName>
    </alternativeName>
</protein>
<organism>
    <name type="scientific">Pectobacterium carotovorum subsp. carotovorum (strain PC1)</name>
    <dbReference type="NCBI Taxonomy" id="561230"/>
    <lineage>
        <taxon>Bacteria</taxon>
        <taxon>Pseudomonadati</taxon>
        <taxon>Pseudomonadota</taxon>
        <taxon>Gammaproteobacteria</taxon>
        <taxon>Enterobacterales</taxon>
        <taxon>Pectobacteriaceae</taxon>
        <taxon>Pectobacterium</taxon>
    </lineage>
</organism>